<name>RL9_ACET2</name>
<keyword id="KW-1185">Reference proteome</keyword>
<keyword id="KW-0687">Ribonucleoprotein</keyword>
<keyword id="KW-0689">Ribosomal protein</keyword>
<keyword id="KW-0694">RNA-binding</keyword>
<keyword id="KW-0699">rRNA-binding</keyword>
<evidence type="ECO:0000255" key="1">
    <source>
        <dbReference type="HAMAP-Rule" id="MF_00503"/>
    </source>
</evidence>
<evidence type="ECO:0000305" key="2"/>
<feature type="chain" id="PRO_1000014771" description="Large ribosomal subunit protein bL9">
    <location>
        <begin position="1"/>
        <end position="148"/>
    </location>
</feature>
<proteinExistence type="inferred from homology"/>
<organism>
    <name type="scientific">Acetivibrio thermocellus (strain ATCC 27405 / DSM 1237 / JCM 9322 / NBRC 103400 / NCIMB 10682 / NRRL B-4536 / VPI 7372)</name>
    <name type="common">Clostridium thermocellum</name>
    <dbReference type="NCBI Taxonomy" id="203119"/>
    <lineage>
        <taxon>Bacteria</taxon>
        <taxon>Bacillati</taxon>
        <taxon>Bacillota</taxon>
        <taxon>Clostridia</taxon>
        <taxon>Eubacteriales</taxon>
        <taxon>Oscillospiraceae</taxon>
        <taxon>Acetivibrio</taxon>
    </lineage>
</organism>
<sequence length="148" mass="16364">MKVILKEDVKGLGKKESLVEVSDGYARNFLIPKGLAVEATAANINIMQTKKEAEKNRKERELAQAKELAEKLKGIVVTLKAKAGENGKLFGSMTSKDVSDYLKKQHNLDIDKKKISLPESMKSLGTYEAEVKLYPGVSAKLTVKIEQE</sequence>
<accession>A3DHN0</accession>
<gene>
    <name evidence="1" type="primary">rplI</name>
    <name type="ordered locus">Cthe_2257</name>
</gene>
<reference key="1">
    <citation type="submission" date="2007-02" db="EMBL/GenBank/DDBJ databases">
        <title>Complete sequence of Clostridium thermocellum ATCC 27405.</title>
        <authorList>
            <consortium name="US DOE Joint Genome Institute"/>
            <person name="Copeland A."/>
            <person name="Lucas S."/>
            <person name="Lapidus A."/>
            <person name="Barry K."/>
            <person name="Detter J.C."/>
            <person name="Glavina del Rio T."/>
            <person name="Hammon N."/>
            <person name="Israni S."/>
            <person name="Dalin E."/>
            <person name="Tice H."/>
            <person name="Pitluck S."/>
            <person name="Chertkov O."/>
            <person name="Brettin T."/>
            <person name="Bruce D."/>
            <person name="Han C."/>
            <person name="Tapia R."/>
            <person name="Gilna P."/>
            <person name="Schmutz J."/>
            <person name="Larimer F."/>
            <person name="Land M."/>
            <person name="Hauser L."/>
            <person name="Kyrpides N."/>
            <person name="Mikhailova N."/>
            <person name="Wu J.H.D."/>
            <person name="Newcomb M."/>
            <person name="Richardson P."/>
        </authorList>
    </citation>
    <scope>NUCLEOTIDE SEQUENCE [LARGE SCALE GENOMIC DNA]</scope>
    <source>
        <strain>ATCC 27405 / DSM 1237 / JCM 9322 / NBRC 103400 / NCIMB 10682 / NRRL B-4536 / VPI 7372</strain>
    </source>
</reference>
<comment type="function">
    <text evidence="1">Binds to the 23S rRNA.</text>
</comment>
<comment type="similarity">
    <text evidence="1">Belongs to the bacterial ribosomal protein bL9 family.</text>
</comment>
<dbReference type="EMBL" id="CP000568">
    <property type="protein sequence ID" value="ABN53459.1"/>
    <property type="molecule type" value="Genomic_DNA"/>
</dbReference>
<dbReference type="RefSeq" id="WP_003513534.1">
    <property type="nucleotide sequence ID" value="NC_009012.1"/>
</dbReference>
<dbReference type="SMR" id="A3DHN0"/>
<dbReference type="STRING" id="203119.Cthe_2257"/>
<dbReference type="GeneID" id="35805059"/>
<dbReference type="KEGG" id="cth:Cthe_2257"/>
<dbReference type="eggNOG" id="COG0359">
    <property type="taxonomic scope" value="Bacteria"/>
</dbReference>
<dbReference type="HOGENOM" id="CLU_078938_3_0_9"/>
<dbReference type="OrthoDB" id="9788336at2"/>
<dbReference type="Proteomes" id="UP000002145">
    <property type="component" value="Chromosome"/>
</dbReference>
<dbReference type="GO" id="GO:1990904">
    <property type="term" value="C:ribonucleoprotein complex"/>
    <property type="evidence" value="ECO:0007669"/>
    <property type="project" value="UniProtKB-KW"/>
</dbReference>
<dbReference type="GO" id="GO:0005840">
    <property type="term" value="C:ribosome"/>
    <property type="evidence" value="ECO:0007669"/>
    <property type="project" value="UniProtKB-KW"/>
</dbReference>
<dbReference type="GO" id="GO:0019843">
    <property type="term" value="F:rRNA binding"/>
    <property type="evidence" value="ECO:0007669"/>
    <property type="project" value="UniProtKB-UniRule"/>
</dbReference>
<dbReference type="GO" id="GO:0003735">
    <property type="term" value="F:structural constituent of ribosome"/>
    <property type="evidence" value="ECO:0007669"/>
    <property type="project" value="InterPro"/>
</dbReference>
<dbReference type="GO" id="GO:0006412">
    <property type="term" value="P:translation"/>
    <property type="evidence" value="ECO:0007669"/>
    <property type="project" value="UniProtKB-UniRule"/>
</dbReference>
<dbReference type="FunFam" id="3.40.5.10:FF:000002">
    <property type="entry name" value="50S ribosomal protein L9"/>
    <property type="match status" value="1"/>
</dbReference>
<dbReference type="Gene3D" id="3.10.430.100">
    <property type="entry name" value="Ribosomal protein L9, C-terminal domain"/>
    <property type="match status" value="1"/>
</dbReference>
<dbReference type="Gene3D" id="3.40.5.10">
    <property type="entry name" value="Ribosomal protein L9, N-terminal domain"/>
    <property type="match status" value="1"/>
</dbReference>
<dbReference type="HAMAP" id="MF_00503">
    <property type="entry name" value="Ribosomal_bL9"/>
    <property type="match status" value="1"/>
</dbReference>
<dbReference type="InterPro" id="IPR000244">
    <property type="entry name" value="Ribosomal_bL9"/>
</dbReference>
<dbReference type="InterPro" id="IPR009027">
    <property type="entry name" value="Ribosomal_bL9/RNase_H1_N"/>
</dbReference>
<dbReference type="InterPro" id="IPR020594">
    <property type="entry name" value="Ribosomal_bL9_bac/chp"/>
</dbReference>
<dbReference type="InterPro" id="IPR020069">
    <property type="entry name" value="Ribosomal_bL9_C"/>
</dbReference>
<dbReference type="InterPro" id="IPR036791">
    <property type="entry name" value="Ribosomal_bL9_C_sf"/>
</dbReference>
<dbReference type="InterPro" id="IPR020070">
    <property type="entry name" value="Ribosomal_bL9_N"/>
</dbReference>
<dbReference type="InterPro" id="IPR036935">
    <property type="entry name" value="Ribosomal_bL9_N_sf"/>
</dbReference>
<dbReference type="NCBIfam" id="TIGR00158">
    <property type="entry name" value="L9"/>
    <property type="match status" value="1"/>
</dbReference>
<dbReference type="PANTHER" id="PTHR21368">
    <property type="entry name" value="50S RIBOSOMAL PROTEIN L9"/>
    <property type="match status" value="1"/>
</dbReference>
<dbReference type="Pfam" id="PF03948">
    <property type="entry name" value="Ribosomal_L9_C"/>
    <property type="match status" value="1"/>
</dbReference>
<dbReference type="Pfam" id="PF01281">
    <property type="entry name" value="Ribosomal_L9_N"/>
    <property type="match status" value="1"/>
</dbReference>
<dbReference type="SUPFAM" id="SSF55658">
    <property type="entry name" value="L9 N-domain-like"/>
    <property type="match status" value="1"/>
</dbReference>
<dbReference type="SUPFAM" id="SSF55653">
    <property type="entry name" value="Ribosomal protein L9 C-domain"/>
    <property type="match status" value="1"/>
</dbReference>
<protein>
    <recommendedName>
        <fullName evidence="1">Large ribosomal subunit protein bL9</fullName>
    </recommendedName>
    <alternativeName>
        <fullName evidence="2">50S ribosomal protein L9</fullName>
    </alternativeName>
</protein>